<reference key="1">
    <citation type="journal article" date="1998" name="Plant Mol. Biol.">
        <title>Cytochrome P450 superfamily in Arabidopsis thaliana: isolation of cDNAs, differential expression, and RFLP mapping of multiple cytochromes P450.</title>
        <authorList>
            <person name="Mizutani M."/>
            <person name="Ward E."/>
            <person name="Ohta D."/>
        </authorList>
    </citation>
    <scope>NUCLEOTIDE SEQUENCE [MRNA]</scope>
    <source>
        <strain>cv. Columbia</strain>
        <tissue>Seedling</tissue>
    </source>
</reference>
<reference key="2">
    <citation type="journal article" date="2000" name="DNA Res.">
        <title>Structural analysis of Arabidopsis thaliana chromosome 3. I. Sequence features of the regions of 4,504,864 bp covered by sixty P1 and TAC clones.</title>
        <authorList>
            <person name="Sato S."/>
            <person name="Nakamura Y."/>
            <person name="Kaneko T."/>
            <person name="Katoh T."/>
            <person name="Asamizu E."/>
            <person name="Tabata S."/>
        </authorList>
    </citation>
    <scope>NUCLEOTIDE SEQUENCE [LARGE SCALE GENOMIC DNA]</scope>
    <source>
        <strain>cv. Columbia</strain>
    </source>
</reference>
<reference key="3">
    <citation type="journal article" date="2017" name="Plant J.">
        <title>Araport11: a complete reannotation of the Arabidopsis thaliana reference genome.</title>
        <authorList>
            <person name="Cheng C.Y."/>
            <person name="Krishnakumar V."/>
            <person name="Chan A.P."/>
            <person name="Thibaud-Nissen F."/>
            <person name="Schobel S."/>
            <person name="Town C.D."/>
        </authorList>
    </citation>
    <scope>GENOME REANNOTATION</scope>
    <source>
        <strain>cv. Columbia</strain>
    </source>
</reference>
<reference key="4">
    <citation type="journal article" date="2003" name="Science">
        <title>Empirical analysis of transcriptional activity in the Arabidopsis genome.</title>
        <authorList>
            <person name="Yamada K."/>
            <person name="Lim J."/>
            <person name="Dale J.M."/>
            <person name="Chen H."/>
            <person name="Shinn P."/>
            <person name="Palm C.J."/>
            <person name="Southwick A.M."/>
            <person name="Wu H.C."/>
            <person name="Kim C.J."/>
            <person name="Nguyen M."/>
            <person name="Pham P.K."/>
            <person name="Cheuk R.F."/>
            <person name="Karlin-Newmann G."/>
            <person name="Liu S.X."/>
            <person name="Lam B."/>
            <person name="Sakano H."/>
            <person name="Wu T."/>
            <person name="Yu G."/>
            <person name="Miranda M."/>
            <person name="Quach H.L."/>
            <person name="Tripp M."/>
            <person name="Chang C.H."/>
            <person name="Lee J.M."/>
            <person name="Toriumi M.J."/>
            <person name="Chan M.M."/>
            <person name="Tang C.C."/>
            <person name="Onodera C.S."/>
            <person name="Deng J.M."/>
            <person name="Akiyama K."/>
            <person name="Ansari Y."/>
            <person name="Arakawa T."/>
            <person name="Banh J."/>
            <person name="Banno F."/>
            <person name="Bowser L."/>
            <person name="Brooks S.Y."/>
            <person name="Carninci P."/>
            <person name="Chao Q."/>
            <person name="Choy N."/>
            <person name="Enju A."/>
            <person name="Goldsmith A.D."/>
            <person name="Gurjal M."/>
            <person name="Hansen N.F."/>
            <person name="Hayashizaki Y."/>
            <person name="Johnson-Hopson C."/>
            <person name="Hsuan V.W."/>
            <person name="Iida K."/>
            <person name="Karnes M."/>
            <person name="Khan S."/>
            <person name="Koesema E."/>
            <person name="Ishida J."/>
            <person name="Jiang P.X."/>
            <person name="Jones T."/>
            <person name="Kawai J."/>
            <person name="Kamiya A."/>
            <person name="Meyers C."/>
            <person name="Nakajima M."/>
            <person name="Narusaka M."/>
            <person name="Seki M."/>
            <person name="Sakurai T."/>
            <person name="Satou M."/>
            <person name="Tamse R."/>
            <person name="Vaysberg M."/>
            <person name="Wallender E.K."/>
            <person name="Wong C."/>
            <person name="Yamamura Y."/>
            <person name="Yuan S."/>
            <person name="Shinozaki K."/>
            <person name="Davis R.W."/>
            <person name="Theologis A."/>
            <person name="Ecker J.R."/>
        </authorList>
    </citation>
    <scope>NUCLEOTIDE SEQUENCE [LARGE SCALE MRNA] OF 2-501</scope>
    <source>
        <strain>cv. Columbia</strain>
    </source>
</reference>
<comment type="cofactor">
    <cofactor evidence="1">
        <name>heme</name>
        <dbReference type="ChEBI" id="CHEBI:30413"/>
    </cofactor>
</comment>
<comment type="subcellular location">
    <subcellularLocation>
        <location evidence="3">Membrane</location>
        <topology evidence="3">Single-pass membrane protein</topology>
    </subcellularLocation>
</comment>
<comment type="similarity">
    <text evidence="3">Belongs to the cytochrome P450 family.</text>
</comment>
<comment type="sequence caution" evidence="3">
    <conflict type="erroneous initiation">
        <sequence resource="EMBL-CDS" id="AAL32750"/>
    </conflict>
</comment>
<accession>O65785</accession>
<accession>Q8W4B9</accession>
<accession>Q9LTL9</accession>
<feature type="chain" id="PRO_0000052081" description="Cytochrome P450 71B3">
    <location>
        <begin position="1"/>
        <end position="501"/>
    </location>
</feature>
<feature type="transmembrane region" description="Helical" evidence="2">
    <location>
        <begin position="2"/>
        <end position="22"/>
    </location>
</feature>
<feature type="binding site" description="axial binding residue" evidence="1">
    <location>
        <position position="445"/>
    </location>
    <ligand>
        <name>heme</name>
        <dbReference type="ChEBI" id="CHEBI:30413"/>
    </ligand>
    <ligandPart>
        <name>Fe</name>
        <dbReference type="ChEBI" id="CHEBI:18248"/>
    </ligandPart>
</feature>
<feature type="sequence conflict" description="In Ref. 1; BAA28534." evidence="3" ref="1">
    <original>KEAA</original>
    <variation>QETT</variation>
    <location>
        <begin position="79"/>
        <end position="82"/>
    </location>
</feature>
<sequence>MSILLYFFFLPVILSLIFMKKFKDSKRNLPPSPPKLPIIGNLHQLRGLFHRCLHDLSKKHGPVLLLRLGFIDMVVISSKEAAEEVLKVHDLECCTRPKTNASSKFSRDGKDIAFAPYGEVSRELRKLSLINFFSTQKVRSFRYIREEENDLMVKKLKESAKKKNTVDLSQTLFYLVGSIIFRATFGQRLDQNKHVNKEKIEELMFEVQKVGSLSSSDIFPAGVGWFMDFVSGRHKTLHKVFVEVDTLLNHVIDGHLKNPEDKTNQDRPDIIDSILETIYKQEQDESFKLTIDHLKGIIQNIYLAGVDTSAITMIWAMAELVKNPRVMKKAQEEIRTCIGIKQKERIEEEDVDKLQYLKLVIKETLRLHPPAPLLLPRETMADIKIQGYDIPRKTILLVNAWSIGRNPELWENPEEFNPERFIDCPMDYKGNSFEMLPFGSGRKICPGIAFGIATVELGLLNLLYYFDWRLAEEDKDIDMEEAGDATIVKKVPLELVPIIHH</sequence>
<name>C71B3_ARATH</name>
<protein>
    <recommendedName>
        <fullName>Cytochrome P450 71B3</fullName>
        <ecNumber>1.14.-.-</ecNumber>
    </recommendedName>
</protein>
<evidence type="ECO:0000250" key="1"/>
<evidence type="ECO:0000255" key="2"/>
<evidence type="ECO:0000305" key="3"/>
<keyword id="KW-0349">Heme</keyword>
<keyword id="KW-0408">Iron</keyword>
<keyword id="KW-0472">Membrane</keyword>
<keyword id="KW-0479">Metal-binding</keyword>
<keyword id="KW-0503">Monooxygenase</keyword>
<keyword id="KW-0560">Oxidoreductase</keyword>
<keyword id="KW-1185">Reference proteome</keyword>
<keyword id="KW-0812">Transmembrane</keyword>
<keyword id="KW-1133">Transmembrane helix</keyword>
<proteinExistence type="evidence at transcript level"/>
<gene>
    <name type="primary">CYP71B3</name>
    <name type="ordered locus">At3g26220</name>
    <name type="ORF">MTC11.13</name>
</gene>
<dbReference type="EC" id="1.14.-.-"/>
<dbReference type="EMBL" id="D78602">
    <property type="protein sequence ID" value="BAA28534.1"/>
    <property type="molecule type" value="mRNA"/>
</dbReference>
<dbReference type="EMBL" id="AB024038">
    <property type="protein sequence ID" value="BAB02443.1"/>
    <property type="molecule type" value="Genomic_DNA"/>
</dbReference>
<dbReference type="EMBL" id="CP002686">
    <property type="protein sequence ID" value="AEE77135.1"/>
    <property type="molecule type" value="Genomic_DNA"/>
</dbReference>
<dbReference type="EMBL" id="AY062672">
    <property type="protein sequence ID" value="AAL32750.1"/>
    <property type="status" value="ALT_INIT"/>
    <property type="molecule type" value="mRNA"/>
</dbReference>
<dbReference type="PIR" id="T52170">
    <property type="entry name" value="T52170"/>
</dbReference>
<dbReference type="RefSeq" id="NP_189253.1">
    <property type="nucleotide sequence ID" value="NM_113529.3"/>
</dbReference>
<dbReference type="SMR" id="O65785"/>
<dbReference type="FunCoup" id="O65785">
    <property type="interactions" value="248"/>
</dbReference>
<dbReference type="STRING" id="3702.O65785"/>
<dbReference type="PaxDb" id="3702-AT3G26220.1"/>
<dbReference type="ProteomicsDB" id="239198"/>
<dbReference type="EnsemblPlants" id="AT3G26220.1">
    <property type="protein sequence ID" value="AT3G26220.1"/>
    <property type="gene ID" value="AT3G26220"/>
</dbReference>
<dbReference type="GeneID" id="822223"/>
<dbReference type="Gramene" id="AT3G26220.1">
    <property type="protein sequence ID" value="AT3G26220.1"/>
    <property type="gene ID" value="AT3G26220"/>
</dbReference>
<dbReference type="KEGG" id="ath:AT3G26220"/>
<dbReference type="Araport" id="AT3G26220"/>
<dbReference type="TAIR" id="AT3G26220">
    <property type="gene designation" value="CYP71B3"/>
</dbReference>
<dbReference type="eggNOG" id="KOG0156">
    <property type="taxonomic scope" value="Eukaryota"/>
</dbReference>
<dbReference type="HOGENOM" id="CLU_001570_4_1_1"/>
<dbReference type="InParanoid" id="O65785"/>
<dbReference type="OMA" id="VMCQLTW"/>
<dbReference type="PhylomeDB" id="O65785"/>
<dbReference type="BioCyc" id="ARA:AT3G26220-MONOMER"/>
<dbReference type="PRO" id="PR:O65785"/>
<dbReference type="Proteomes" id="UP000006548">
    <property type="component" value="Chromosome 3"/>
</dbReference>
<dbReference type="ExpressionAtlas" id="O65785">
    <property type="expression patterns" value="baseline and differential"/>
</dbReference>
<dbReference type="GO" id="GO:0016020">
    <property type="term" value="C:membrane"/>
    <property type="evidence" value="ECO:0007669"/>
    <property type="project" value="UniProtKB-SubCell"/>
</dbReference>
<dbReference type="GO" id="GO:0020037">
    <property type="term" value="F:heme binding"/>
    <property type="evidence" value="ECO:0007669"/>
    <property type="project" value="InterPro"/>
</dbReference>
<dbReference type="GO" id="GO:0005506">
    <property type="term" value="F:iron ion binding"/>
    <property type="evidence" value="ECO:0007669"/>
    <property type="project" value="InterPro"/>
</dbReference>
<dbReference type="GO" id="GO:0004497">
    <property type="term" value="F:monooxygenase activity"/>
    <property type="evidence" value="ECO:0007669"/>
    <property type="project" value="UniProtKB-KW"/>
</dbReference>
<dbReference type="GO" id="GO:0016705">
    <property type="term" value="F:oxidoreductase activity, acting on paired donors, with incorporation or reduction of molecular oxygen"/>
    <property type="evidence" value="ECO:0007669"/>
    <property type="project" value="InterPro"/>
</dbReference>
<dbReference type="CDD" id="cd11072">
    <property type="entry name" value="CYP71-like"/>
    <property type="match status" value="1"/>
</dbReference>
<dbReference type="FunFam" id="1.10.630.10:FF:000011">
    <property type="entry name" value="Cytochrome P450 83B1"/>
    <property type="match status" value="1"/>
</dbReference>
<dbReference type="Gene3D" id="1.10.630.10">
    <property type="entry name" value="Cytochrome P450"/>
    <property type="match status" value="1"/>
</dbReference>
<dbReference type="InterPro" id="IPR001128">
    <property type="entry name" value="Cyt_P450"/>
</dbReference>
<dbReference type="InterPro" id="IPR017972">
    <property type="entry name" value="Cyt_P450_CS"/>
</dbReference>
<dbReference type="InterPro" id="IPR002401">
    <property type="entry name" value="Cyt_P450_E_grp-I"/>
</dbReference>
<dbReference type="InterPro" id="IPR036396">
    <property type="entry name" value="Cyt_P450_sf"/>
</dbReference>
<dbReference type="PANTHER" id="PTHR47955:SF19">
    <property type="entry name" value="CYTOCHROME P450 71A9-LIKE ISOFORM X1"/>
    <property type="match status" value="1"/>
</dbReference>
<dbReference type="PANTHER" id="PTHR47955">
    <property type="entry name" value="CYTOCHROME P450 FAMILY 71 PROTEIN"/>
    <property type="match status" value="1"/>
</dbReference>
<dbReference type="Pfam" id="PF00067">
    <property type="entry name" value="p450"/>
    <property type="match status" value="1"/>
</dbReference>
<dbReference type="PRINTS" id="PR00463">
    <property type="entry name" value="EP450I"/>
</dbReference>
<dbReference type="PRINTS" id="PR00385">
    <property type="entry name" value="P450"/>
</dbReference>
<dbReference type="SUPFAM" id="SSF48264">
    <property type="entry name" value="Cytochrome P450"/>
    <property type="match status" value="1"/>
</dbReference>
<dbReference type="PROSITE" id="PS00086">
    <property type="entry name" value="CYTOCHROME_P450"/>
    <property type="match status" value="1"/>
</dbReference>
<organism>
    <name type="scientific">Arabidopsis thaliana</name>
    <name type="common">Mouse-ear cress</name>
    <dbReference type="NCBI Taxonomy" id="3702"/>
    <lineage>
        <taxon>Eukaryota</taxon>
        <taxon>Viridiplantae</taxon>
        <taxon>Streptophyta</taxon>
        <taxon>Embryophyta</taxon>
        <taxon>Tracheophyta</taxon>
        <taxon>Spermatophyta</taxon>
        <taxon>Magnoliopsida</taxon>
        <taxon>eudicotyledons</taxon>
        <taxon>Gunneridae</taxon>
        <taxon>Pentapetalae</taxon>
        <taxon>rosids</taxon>
        <taxon>malvids</taxon>
        <taxon>Brassicales</taxon>
        <taxon>Brassicaceae</taxon>
        <taxon>Camelineae</taxon>
        <taxon>Arabidopsis</taxon>
    </lineage>
</organism>